<comment type="function">
    <text evidence="1">Catalyzes the ATP-dependent transfer of a sulfur to tRNA to produce 4-thiouridine in position 8 of tRNAs, which functions as a near-UV photosensor. Also catalyzes the transfer of sulfur to the sulfur carrier protein ThiS, forming ThiS-thiocarboxylate. This is a step in the synthesis of thiazole, in the thiamine biosynthesis pathway. The sulfur is donated as persulfide by IscS.</text>
</comment>
<comment type="catalytic activity">
    <reaction evidence="1">
        <text>[ThiI sulfur-carrier protein]-S-sulfanyl-L-cysteine + a uridine in tRNA + 2 reduced [2Fe-2S]-[ferredoxin] + ATP + H(+) = [ThiI sulfur-carrier protein]-L-cysteine + a 4-thiouridine in tRNA + 2 oxidized [2Fe-2S]-[ferredoxin] + AMP + diphosphate</text>
        <dbReference type="Rhea" id="RHEA:24176"/>
        <dbReference type="Rhea" id="RHEA-COMP:10000"/>
        <dbReference type="Rhea" id="RHEA-COMP:10001"/>
        <dbReference type="Rhea" id="RHEA-COMP:13337"/>
        <dbReference type="Rhea" id="RHEA-COMP:13338"/>
        <dbReference type="Rhea" id="RHEA-COMP:13339"/>
        <dbReference type="Rhea" id="RHEA-COMP:13340"/>
        <dbReference type="ChEBI" id="CHEBI:15378"/>
        <dbReference type="ChEBI" id="CHEBI:29950"/>
        <dbReference type="ChEBI" id="CHEBI:30616"/>
        <dbReference type="ChEBI" id="CHEBI:33019"/>
        <dbReference type="ChEBI" id="CHEBI:33737"/>
        <dbReference type="ChEBI" id="CHEBI:33738"/>
        <dbReference type="ChEBI" id="CHEBI:61963"/>
        <dbReference type="ChEBI" id="CHEBI:65315"/>
        <dbReference type="ChEBI" id="CHEBI:136798"/>
        <dbReference type="ChEBI" id="CHEBI:456215"/>
        <dbReference type="EC" id="2.8.1.4"/>
    </reaction>
</comment>
<comment type="catalytic activity">
    <reaction evidence="1">
        <text>[ThiS sulfur-carrier protein]-C-terminal Gly-Gly-AMP + S-sulfanyl-L-cysteinyl-[cysteine desulfurase] + AH2 = [ThiS sulfur-carrier protein]-C-terminal-Gly-aminoethanethioate + L-cysteinyl-[cysteine desulfurase] + A + AMP + 2 H(+)</text>
        <dbReference type="Rhea" id="RHEA:43340"/>
        <dbReference type="Rhea" id="RHEA-COMP:12157"/>
        <dbReference type="Rhea" id="RHEA-COMP:12158"/>
        <dbReference type="Rhea" id="RHEA-COMP:12910"/>
        <dbReference type="Rhea" id="RHEA-COMP:19908"/>
        <dbReference type="ChEBI" id="CHEBI:13193"/>
        <dbReference type="ChEBI" id="CHEBI:15378"/>
        <dbReference type="ChEBI" id="CHEBI:17499"/>
        <dbReference type="ChEBI" id="CHEBI:29950"/>
        <dbReference type="ChEBI" id="CHEBI:61963"/>
        <dbReference type="ChEBI" id="CHEBI:90618"/>
        <dbReference type="ChEBI" id="CHEBI:232372"/>
        <dbReference type="ChEBI" id="CHEBI:456215"/>
    </reaction>
</comment>
<comment type="pathway">
    <text evidence="1">Cofactor biosynthesis; thiamine diphosphate biosynthesis.</text>
</comment>
<comment type="subcellular location">
    <subcellularLocation>
        <location evidence="1">Cytoplasm</location>
    </subcellularLocation>
</comment>
<comment type="similarity">
    <text evidence="1">Belongs to the ThiI family.</text>
</comment>
<reference key="1">
    <citation type="journal article" date="2004" name="Proc. Natl. Acad. Sci. U.S.A.">
        <title>Complete genomes of two clinical Staphylococcus aureus strains: evidence for the rapid evolution of virulence and drug resistance.</title>
        <authorList>
            <person name="Holden M.T.G."/>
            <person name="Feil E.J."/>
            <person name="Lindsay J.A."/>
            <person name="Peacock S.J."/>
            <person name="Day N.P.J."/>
            <person name="Enright M.C."/>
            <person name="Foster T.J."/>
            <person name="Moore C.E."/>
            <person name="Hurst L."/>
            <person name="Atkin R."/>
            <person name="Barron A."/>
            <person name="Bason N."/>
            <person name="Bentley S.D."/>
            <person name="Chillingworth C."/>
            <person name="Chillingworth T."/>
            <person name="Churcher C."/>
            <person name="Clark L."/>
            <person name="Corton C."/>
            <person name="Cronin A."/>
            <person name="Doggett J."/>
            <person name="Dowd L."/>
            <person name="Feltwell T."/>
            <person name="Hance Z."/>
            <person name="Harris B."/>
            <person name="Hauser H."/>
            <person name="Holroyd S."/>
            <person name="Jagels K."/>
            <person name="James K.D."/>
            <person name="Lennard N."/>
            <person name="Line A."/>
            <person name="Mayes R."/>
            <person name="Moule S."/>
            <person name="Mungall K."/>
            <person name="Ormond D."/>
            <person name="Quail M.A."/>
            <person name="Rabbinowitsch E."/>
            <person name="Rutherford K.M."/>
            <person name="Sanders M."/>
            <person name="Sharp S."/>
            <person name="Simmonds M."/>
            <person name="Stevens K."/>
            <person name="Whitehead S."/>
            <person name="Barrell B.G."/>
            <person name="Spratt B.G."/>
            <person name="Parkhill J."/>
        </authorList>
    </citation>
    <scope>NUCLEOTIDE SEQUENCE [LARGE SCALE GENOMIC DNA]</scope>
    <source>
        <strain>MSSA476</strain>
    </source>
</reference>
<organism>
    <name type="scientific">Staphylococcus aureus (strain MSSA476)</name>
    <dbReference type="NCBI Taxonomy" id="282459"/>
    <lineage>
        <taxon>Bacteria</taxon>
        <taxon>Bacillati</taxon>
        <taxon>Bacillota</taxon>
        <taxon>Bacilli</taxon>
        <taxon>Bacillales</taxon>
        <taxon>Staphylococcaceae</taxon>
        <taxon>Staphylococcus</taxon>
    </lineage>
</organism>
<sequence>MKYDHLLVRYGELTLKGSNRKKFVNQLRNNVNKSLKGLDGFVVKGKRDRMYIELEDHADINEITYRLSKIFGIKSISPVLKVEKTIEAMSAAAIKFAQQFEENSTFKIDVKRADKNFPMDTYELQRELGGAILKHFDNISVNVKRPDHEIRVEVRLDAIYMYEEVVPGSGGLPVGTGGKTLLMLSGGIDSPVAGMEVMRRGVTIEAIHFHSPPFTSDQAKEKVIELTRILAERVGPIKLHIVPFTELQKQVNKVVHPRYTMTSTRRMMMRVADKLVHQIGALAIVNGENLGQVASQTLHSMYAINNVTSTPVLRPLLTYDKEEIIIKSKEIGTFETSIQPFEDCCTIFTPKNPVTEPNFDKVVQYESVFDFEEMINRAVENIETLEITSDYKTIKEQQTNQLINDFL</sequence>
<gene>
    <name evidence="1" type="primary">thiI</name>
    <name type="ordered locus">SAS1642</name>
</gene>
<feature type="chain" id="PRO_0000154867" description="Probable tRNA sulfurtransferase">
    <location>
        <begin position="1"/>
        <end position="407"/>
    </location>
</feature>
<feature type="domain" description="THUMP" evidence="1">
    <location>
        <begin position="61"/>
        <end position="165"/>
    </location>
</feature>
<feature type="binding site" evidence="1">
    <location>
        <begin position="183"/>
        <end position="184"/>
    </location>
    <ligand>
        <name>ATP</name>
        <dbReference type="ChEBI" id="CHEBI:30616"/>
    </ligand>
</feature>
<feature type="binding site" evidence="1">
    <location>
        <begin position="208"/>
        <end position="209"/>
    </location>
    <ligand>
        <name>ATP</name>
        <dbReference type="ChEBI" id="CHEBI:30616"/>
    </ligand>
</feature>
<feature type="binding site" evidence="1">
    <location>
        <position position="265"/>
    </location>
    <ligand>
        <name>ATP</name>
        <dbReference type="ChEBI" id="CHEBI:30616"/>
    </ligand>
</feature>
<feature type="binding site" evidence="1">
    <location>
        <position position="287"/>
    </location>
    <ligand>
        <name>ATP</name>
        <dbReference type="ChEBI" id="CHEBI:30616"/>
    </ligand>
</feature>
<feature type="binding site" evidence="1">
    <location>
        <position position="296"/>
    </location>
    <ligand>
        <name>ATP</name>
        <dbReference type="ChEBI" id="CHEBI:30616"/>
    </ligand>
</feature>
<keyword id="KW-0067">ATP-binding</keyword>
<keyword id="KW-0963">Cytoplasm</keyword>
<keyword id="KW-0547">Nucleotide-binding</keyword>
<keyword id="KW-0694">RNA-binding</keyword>
<keyword id="KW-0784">Thiamine biosynthesis</keyword>
<keyword id="KW-0808">Transferase</keyword>
<keyword id="KW-0820">tRNA-binding</keyword>
<proteinExistence type="inferred from homology"/>
<accession>Q6G8L2</accession>
<evidence type="ECO:0000255" key="1">
    <source>
        <dbReference type="HAMAP-Rule" id="MF_00021"/>
    </source>
</evidence>
<protein>
    <recommendedName>
        <fullName evidence="1">Probable tRNA sulfurtransferase</fullName>
        <ecNumber evidence="1">2.8.1.4</ecNumber>
    </recommendedName>
    <alternativeName>
        <fullName evidence="1">Sulfur carrier protein ThiS sulfurtransferase</fullName>
    </alternativeName>
    <alternativeName>
        <fullName evidence="1">Thiamine biosynthesis protein ThiI</fullName>
    </alternativeName>
    <alternativeName>
        <fullName evidence="1">tRNA 4-thiouridine synthase</fullName>
    </alternativeName>
</protein>
<dbReference type="EC" id="2.8.1.4" evidence="1"/>
<dbReference type="EMBL" id="BX571857">
    <property type="protein sequence ID" value="CAG43444.1"/>
    <property type="molecule type" value="Genomic_DNA"/>
</dbReference>
<dbReference type="RefSeq" id="WP_000872657.1">
    <property type="nucleotide sequence ID" value="NC_002953.3"/>
</dbReference>
<dbReference type="SMR" id="Q6G8L2"/>
<dbReference type="KEGG" id="sas:SAS1642"/>
<dbReference type="HOGENOM" id="CLU_037952_4_0_9"/>
<dbReference type="UniPathway" id="UPA00060"/>
<dbReference type="GO" id="GO:0005829">
    <property type="term" value="C:cytosol"/>
    <property type="evidence" value="ECO:0007669"/>
    <property type="project" value="TreeGrafter"/>
</dbReference>
<dbReference type="GO" id="GO:0005524">
    <property type="term" value="F:ATP binding"/>
    <property type="evidence" value="ECO:0007669"/>
    <property type="project" value="UniProtKB-UniRule"/>
</dbReference>
<dbReference type="GO" id="GO:0004810">
    <property type="term" value="F:CCA tRNA nucleotidyltransferase activity"/>
    <property type="evidence" value="ECO:0007669"/>
    <property type="project" value="InterPro"/>
</dbReference>
<dbReference type="GO" id="GO:0000049">
    <property type="term" value="F:tRNA binding"/>
    <property type="evidence" value="ECO:0007669"/>
    <property type="project" value="UniProtKB-UniRule"/>
</dbReference>
<dbReference type="GO" id="GO:0140741">
    <property type="term" value="F:tRNA-uracil-4 sulfurtransferase activity"/>
    <property type="evidence" value="ECO:0007669"/>
    <property type="project" value="UniProtKB-EC"/>
</dbReference>
<dbReference type="GO" id="GO:0009228">
    <property type="term" value="P:thiamine biosynthetic process"/>
    <property type="evidence" value="ECO:0007669"/>
    <property type="project" value="UniProtKB-KW"/>
</dbReference>
<dbReference type="GO" id="GO:0009229">
    <property type="term" value="P:thiamine diphosphate biosynthetic process"/>
    <property type="evidence" value="ECO:0007669"/>
    <property type="project" value="UniProtKB-UniRule"/>
</dbReference>
<dbReference type="GO" id="GO:0052837">
    <property type="term" value="P:thiazole biosynthetic process"/>
    <property type="evidence" value="ECO:0007669"/>
    <property type="project" value="TreeGrafter"/>
</dbReference>
<dbReference type="GO" id="GO:0002937">
    <property type="term" value="P:tRNA 4-thiouridine biosynthesis"/>
    <property type="evidence" value="ECO:0007669"/>
    <property type="project" value="TreeGrafter"/>
</dbReference>
<dbReference type="CDD" id="cd01712">
    <property type="entry name" value="PPase_ThiI"/>
    <property type="match status" value="1"/>
</dbReference>
<dbReference type="CDD" id="cd11716">
    <property type="entry name" value="THUMP_ThiI"/>
    <property type="match status" value="1"/>
</dbReference>
<dbReference type="FunFam" id="3.30.2130.30:FF:000009">
    <property type="entry name" value="Probable tRNA sulfurtransferase"/>
    <property type="match status" value="1"/>
</dbReference>
<dbReference type="FunFam" id="3.40.50.620:FF:000053">
    <property type="entry name" value="Probable tRNA sulfurtransferase"/>
    <property type="match status" value="1"/>
</dbReference>
<dbReference type="Gene3D" id="3.30.2130.30">
    <property type="match status" value="1"/>
</dbReference>
<dbReference type="Gene3D" id="3.40.50.620">
    <property type="entry name" value="HUPs"/>
    <property type="match status" value="1"/>
</dbReference>
<dbReference type="HAMAP" id="MF_00021">
    <property type="entry name" value="ThiI"/>
    <property type="match status" value="1"/>
</dbReference>
<dbReference type="InterPro" id="IPR014729">
    <property type="entry name" value="Rossmann-like_a/b/a_fold"/>
</dbReference>
<dbReference type="InterPro" id="IPR020536">
    <property type="entry name" value="ThiI_AANH"/>
</dbReference>
<dbReference type="InterPro" id="IPR054173">
    <property type="entry name" value="ThiI_fer"/>
</dbReference>
<dbReference type="InterPro" id="IPR049961">
    <property type="entry name" value="ThiI_N"/>
</dbReference>
<dbReference type="InterPro" id="IPR004114">
    <property type="entry name" value="THUMP_dom"/>
</dbReference>
<dbReference type="InterPro" id="IPR049962">
    <property type="entry name" value="THUMP_ThiI"/>
</dbReference>
<dbReference type="InterPro" id="IPR003720">
    <property type="entry name" value="tRNA_STrfase"/>
</dbReference>
<dbReference type="InterPro" id="IPR050102">
    <property type="entry name" value="tRNA_sulfurtransferase_ThiI"/>
</dbReference>
<dbReference type="NCBIfam" id="TIGR00342">
    <property type="entry name" value="tRNA uracil 4-sulfurtransferase ThiI"/>
    <property type="match status" value="1"/>
</dbReference>
<dbReference type="PANTHER" id="PTHR43209">
    <property type="entry name" value="TRNA SULFURTRANSFERASE"/>
    <property type="match status" value="1"/>
</dbReference>
<dbReference type="PANTHER" id="PTHR43209:SF1">
    <property type="entry name" value="TRNA SULFURTRANSFERASE"/>
    <property type="match status" value="1"/>
</dbReference>
<dbReference type="Pfam" id="PF02568">
    <property type="entry name" value="ThiI"/>
    <property type="match status" value="1"/>
</dbReference>
<dbReference type="Pfam" id="PF22025">
    <property type="entry name" value="ThiI_fer"/>
    <property type="match status" value="1"/>
</dbReference>
<dbReference type="Pfam" id="PF02926">
    <property type="entry name" value="THUMP"/>
    <property type="match status" value="1"/>
</dbReference>
<dbReference type="SMART" id="SM00981">
    <property type="entry name" value="THUMP"/>
    <property type="match status" value="1"/>
</dbReference>
<dbReference type="SUPFAM" id="SSF52402">
    <property type="entry name" value="Adenine nucleotide alpha hydrolases-like"/>
    <property type="match status" value="1"/>
</dbReference>
<dbReference type="SUPFAM" id="SSF143437">
    <property type="entry name" value="THUMP domain-like"/>
    <property type="match status" value="1"/>
</dbReference>
<dbReference type="PROSITE" id="PS51165">
    <property type="entry name" value="THUMP"/>
    <property type="match status" value="1"/>
</dbReference>
<name>THII_STAAS</name>